<comment type="function">
    <text>Lea proteins are late embryonic proteins abundant in higher plant seed embryos.</text>
</comment>
<comment type="induction">
    <text>By abscisic acid (ABA).</text>
</comment>
<comment type="similarity">
    <text evidence="2">Belongs to the LEA type 4 family.</text>
</comment>
<accession>P13934</accession>
<protein>
    <recommendedName>
        <fullName>Late embryogenesis abundant protein 76</fullName>
        <shortName>LEA 76</shortName>
    </recommendedName>
</protein>
<proteinExistence type="evidence at transcript level"/>
<feature type="chain" id="PRO_0000221219" description="Late embryogenesis abundant protein 76">
    <location>
        <begin position="1"/>
        <end position="280"/>
    </location>
</feature>
<feature type="repeat" description="LEA 11-mer repeat">
    <location>
        <begin position="31"/>
        <end position="41"/>
    </location>
</feature>
<feature type="repeat" description="LEA 11-mer repeat">
    <location>
        <begin position="53"/>
        <end position="63"/>
    </location>
</feature>
<feature type="repeat" description="LEA 11-mer repeat">
    <location>
        <begin position="75"/>
        <end position="85"/>
    </location>
</feature>
<feature type="repeat" description="LEA 11-mer repeat">
    <location>
        <begin position="97"/>
        <end position="107"/>
    </location>
</feature>
<feature type="repeat" description="LEA 11-mer repeat">
    <location>
        <begin position="119"/>
        <end position="129"/>
    </location>
</feature>
<feature type="region of interest" description="Disordered" evidence="1">
    <location>
        <begin position="1"/>
        <end position="156"/>
    </location>
</feature>
<feature type="region of interest" description="Disordered" evidence="1">
    <location>
        <begin position="220"/>
        <end position="241"/>
    </location>
</feature>
<feature type="compositionally biased region" description="Basic and acidic residues" evidence="1">
    <location>
        <begin position="28"/>
        <end position="39"/>
    </location>
</feature>
<feature type="compositionally biased region" description="Low complexity" evidence="1">
    <location>
        <begin position="40"/>
        <end position="114"/>
    </location>
</feature>
<feature type="compositionally biased region" description="Basic and acidic residues" evidence="1">
    <location>
        <begin position="115"/>
        <end position="127"/>
    </location>
</feature>
<feature type="compositionally biased region" description="Basic and acidic residues" evidence="1">
    <location>
        <begin position="136"/>
        <end position="145"/>
    </location>
</feature>
<feature type="compositionally biased region" description="Low complexity" evidence="1">
    <location>
        <begin position="230"/>
        <end position="239"/>
    </location>
</feature>
<name>LEA76_BRANA</name>
<reference key="1">
    <citation type="journal article" date="1989" name="Plant Mol. Biol.">
        <title>Unusual sequence of an abscisic acid-inducible mRNA which accumulates late in Brassica napus seed development.</title>
        <authorList>
            <person name="Harada J.J."/>
            <person name="Delisle A.J."/>
            <person name="Baden C.S."/>
            <person name="Crouch M.L."/>
        </authorList>
    </citation>
    <scope>NUCLEOTIDE SEQUENCE [MRNA]</scope>
    <source>
        <tissue>Seed</tissue>
    </source>
</reference>
<sequence>MASNQQSYKAGETRGKTQEKTGQAMGAMRDKAEEGKDKTSQTAQKAQQKAQETAQAAKDKTSQAAQTTQQKAQETAQAAKDKTSQAAQTTQQKAQETAQAAKDKTSQAAQTTQQKAHETTQSSKEKTSQAAQTAQEKARETKDKTGSYLSETGEAVKQKAQDAAQYTKETAQNAAQYTKETAEAGKDKTGGFLSQTGEHVKQMAMGAADAVKHTFGMATEEEDREHYPGTTTCTTQSTDPTRHTYEKEVRITGTIYEPSFFCFNNVMCLCFVISVVSLCL</sequence>
<organism>
    <name type="scientific">Brassica napus</name>
    <name type="common">Rape</name>
    <dbReference type="NCBI Taxonomy" id="3708"/>
    <lineage>
        <taxon>Eukaryota</taxon>
        <taxon>Viridiplantae</taxon>
        <taxon>Streptophyta</taxon>
        <taxon>Embryophyta</taxon>
        <taxon>Tracheophyta</taxon>
        <taxon>Spermatophyta</taxon>
        <taxon>Magnoliopsida</taxon>
        <taxon>eudicotyledons</taxon>
        <taxon>Gunneridae</taxon>
        <taxon>Pentapetalae</taxon>
        <taxon>rosids</taxon>
        <taxon>malvids</taxon>
        <taxon>Brassicales</taxon>
        <taxon>Brassicaceae</taxon>
        <taxon>Brassiceae</taxon>
        <taxon>Brassica</taxon>
    </lineage>
</organism>
<keyword id="KW-0677">Repeat</keyword>
<dbReference type="EMBL" id="X15348">
    <property type="protein sequence ID" value="CAA33406.1"/>
    <property type="molecule type" value="mRNA"/>
</dbReference>
<dbReference type="PIR" id="S04130">
    <property type="entry name" value="S04130"/>
</dbReference>
<dbReference type="RefSeq" id="NP_001302654.1">
    <property type="nucleotide sequence ID" value="NM_001315725.1"/>
</dbReference>
<dbReference type="SMR" id="P13934"/>
<dbReference type="GeneID" id="106387498"/>
<dbReference type="KEGG" id="bna:106387498"/>
<dbReference type="OrthoDB" id="2193576at2759"/>
<dbReference type="Gene3D" id="6.10.140.1430">
    <property type="match status" value="1"/>
</dbReference>
<dbReference type="Gene3D" id="1.10.287.700">
    <property type="entry name" value="Helix hairpin bin"/>
    <property type="match status" value="1"/>
</dbReference>
<dbReference type="PANTHER" id="PTHR47372">
    <property type="entry name" value="DAUER UP-REGULATED-RELATED"/>
    <property type="match status" value="1"/>
</dbReference>
<dbReference type="PANTHER" id="PTHR47372:SF44">
    <property type="entry name" value="LATE EMBRYOGENESIS ABUNDANT PROTEIN 7"/>
    <property type="match status" value="1"/>
</dbReference>
<dbReference type="SUPFAM" id="SSF58113">
    <property type="entry name" value="Apolipoprotein A-I"/>
    <property type="match status" value="1"/>
</dbReference>
<evidence type="ECO:0000256" key="1">
    <source>
        <dbReference type="SAM" id="MobiDB-lite"/>
    </source>
</evidence>
<evidence type="ECO:0000305" key="2"/>